<organism>
    <name type="scientific">Bacillus cereus (strain AH820)</name>
    <dbReference type="NCBI Taxonomy" id="405535"/>
    <lineage>
        <taxon>Bacteria</taxon>
        <taxon>Bacillati</taxon>
        <taxon>Bacillota</taxon>
        <taxon>Bacilli</taxon>
        <taxon>Bacillales</taxon>
        <taxon>Bacillaceae</taxon>
        <taxon>Bacillus</taxon>
        <taxon>Bacillus cereus group</taxon>
    </lineage>
</organism>
<accession>B7JK17</accession>
<comment type="function">
    <text evidence="1">Reversibly transfers an adenylyl group from ATP to 4'-phosphopantetheine, yielding dephospho-CoA (dPCoA) and pyrophosphate.</text>
</comment>
<comment type="catalytic activity">
    <reaction evidence="1">
        <text>(R)-4'-phosphopantetheine + ATP + H(+) = 3'-dephospho-CoA + diphosphate</text>
        <dbReference type="Rhea" id="RHEA:19801"/>
        <dbReference type="ChEBI" id="CHEBI:15378"/>
        <dbReference type="ChEBI" id="CHEBI:30616"/>
        <dbReference type="ChEBI" id="CHEBI:33019"/>
        <dbReference type="ChEBI" id="CHEBI:57328"/>
        <dbReference type="ChEBI" id="CHEBI:61723"/>
        <dbReference type="EC" id="2.7.7.3"/>
    </reaction>
</comment>
<comment type="cofactor">
    <cofactor evidence="1">
        <name>Mg(2+)</name>
        <dbReference type="ChEBI" id="CHEBI:18420"/>
    </cofactor>
</comment>
<comment type="pathway">
    <text evidence="1">Cofactor biosynthesis; coenzyme A biosynthesis; CoA from (R)-pantothenate: step 4/5.</text>
</comment>
<comment type="subunit">
    <text evidence="1">Homohexamer.</text>
</comment>
<comment type="subcellular location">
    <subcellularLocation>
        <location evidence="1">Cytoplasm</location>
    </subcellularLocation>
</comment>
<comment type="similarity">
    <text evidence="1">Belongs to the bacterial CoaD family.</text>
</comment>
<sequence>MTSIAISSGSFDPITLGHLDIIKRGAKVFDEVYVVVLNNSSKKPFFSVEERLDLIREATKDIPNVKVDSHSGLLVEYAKMRNANAILRGLRAVSDFEYEMQITSMNRKLDENIETFFIMTNNQYSFLSSSIVKEVARYGGSVVDLVPPVVERALKEKFQTPLK</sequence>
<protein>
    <recommendedName>
        <fullName evidence="1">Phosphopantetheine adenylyltransferase</fullName>
        <ecNumber evidence="1">2.7.7.3</ecNumber>
    </recommendedName>
    <alternativeName>
        <fullName evidence="1">Dephospho-CoA pyrophosphorylase</fullName>
    </alternativeName>
    <alternativeName>
        <fullName evidence="1">Pantetheine-phosphate adenylyltransferase</fullName>
        <shortName evidence="1">PPAT</shortName>
    </alternativeName>
</protein>
<evidence type="ECO:0000255" key="1">
    <source>
        <dbReference type="HAMAP-Rule" id="MF_00151"/>
    </source>
</evidence>
<feature type="chain" id="PRO_1000118066" description="Phosphopantetheine adenylyltransferase">
    <location>
        <begin position="1"/>
        <end position="163"/>
    </location>
</feature>
<feature type="binding site" evidence="1">
    <location>
        <begin position="10"/>
        <end position="11"/>
    </location>
    <ligand>
        <name>ATP</name>
        <dbReference type="ChEBI" id="CHEBI:30616"/>
    </ligand>
</feature>
<feature type="binding site" evidence="1">
    <location>
        <position position="10"/>
    </location>
    <ligand>
        <name>substrate</name>
    </ligand>
</feature>
<feature type="binding site" evidence="1">
    <location>
        <position position="18"/>
    </location>
    <ligand>
        <name>ATP</name>
        <dbReference type="ChEBI" id="CHEBI:30616"/>
    </ligand>
</feature>
<feature type="binding site" evidence="1">
    <location>
        <position position="42"/>
    </location>
    <ligand>
        <name>substrate</name>
    </ligand>
</feature>
<feature type="binding site" evidence="1">
    <location>
        <position position="74"/>
    </location>
    <ligand>
        <name>substrate</name>
    </ligand>
</feature>
<feature type="binding site" evidence="1">
    <location>
        <position position="88"/>
    </location>
    <ligand>
        <name>substrate</name>
    </ligand>
</feature>
<feature type="binding site" evidence="1">
    <location>
        <begin position="89"/>
        <end position="91"/>
    </location>
    <ligand>
        <name>ATP</name>
        <dbReference type="ChEBI" id="CHEBI:30616"/>
    </ligand>
</feature>
<feature type="binding site" evidence="1">
    <location>
        <position position="99"/>
    </location>
    <ligand>
        <name>ATP</name>
        <dbReference type="ChEBI" id="CHEBI:30616"/>
    </ligand>
</feature>
<feature type="binding site" evidence="1">
    <location>
        <begin position="124"/>
        <end position="130"/>
    </location>
    <ligand>
        <name>ATP</name>
        <dbReference type="ChEBI" id="CHEBI:30616"/>
    </ligand>
</feature>
<feature type="site" description="Transition state stabilizer" evidence="1">
    <location>
        <position position="18"/>
    </location>
</feature>
<keyword id="KW-0067">ATP-binding</keyword>
<keyword id="KW-0173">Coenzyme A biosynthesis</keyword>
<keyword id="KW-0963">Cytoplasm</keyword>
<keyword id="KW-0460">Magnesium</keyword>
<keyword id="KW-0547">Nucleotide-binding</keyword>
<keyword id="KW-0548">Nucleotidyltransferase</keyword>
<keyword id="KW-0808">Transferase</keyword>
<dbReference type="EC" id="2.7.7.3" evidence="1"/>
<dbReference type="EMBL" id="CP001283">
    <property type="protein sequence ID" value="ACK87473.1"/>
    <property type="molecule type" value="Genomic_DNA"/>
</dbReference>
<dbReference type="RefSeq" id="WP_000200598.1">
    <property type="nucleotide sequence ID" value="NC_011773.1"/>
</dbReference>
<dbReference type="SMR" id="B7JK17"/>
<dbReference type="GeneID" id="92799798"/>
<dbReference type="KEGG" id="bcu:BCAH820_3943"/>
<dbReference type="HOGENOM" id="CLU_100149_0_1_9"/>
<dbReference type="UniPathway" id="UPA00241">
    <property type="reaction ID" value="UER00355"/>
</dbReference>
<dbReference type="Proteomes" id="UP000001363">
    <property type="component" value="Chromosome"/>
</dbReference>
<dbReference type="GO" id="GO:0005737">
    <property type="term" value="C:cytoplasm"/>
    <property type="evidence" value="ECO:0007669"/>
    <property type="project" value="UniProtKB-SubCell"/>
</dbReference>
<dbReference type="GO" id="GO:0005524">
    <property type="term" value="F:ATP binding"/>
    <property type="evidence" value="ECO:0007669"/>
    <property type="project" value="UniProtKB-KW"/>
</dbReference>
<dbReference type="GO" id="GO:0004595">
    <property type="term" value="F:pantetheine-phosphate adenylyltransferase activity"/>
    <property type="evidence" value="ECO:0007669"/>
    <property type="project" value="UniProtKB-UniRule"/>
</dbReference>
<dbReference type="GO" id="GO:0015937">
    <property type="term" value="P:coenzyme A biosynthetic process"/>
    <property type="evidence" value="ECO:0007669"/>
    <property type="project" value="UniProtKB-UniRule"/>
</dbReference>
<dbReference type="CDD" id="cd02163">
    <property type="entry name" value="PPAT"/>
    <property type="match status" value="1"/>
</dbReference>
<dbReference type="FunFam" id="3.40.50.620:FF:000012">
    <property type="entry name" value="Phosphopantetheine adenylyltransferase"/>
    <property type="match status" value="1"/>
</dbReference>
<dbReference type="Gene3D" id="3.40.50.620">
    <property type="entry name" value="HUPs"/>
    <property type="match status" value="1"/>
</dbReference>
<dbReference type="HAMAP" id="MF_00151">
    <property type="entry name" value="PPAT_bact"/>
    <property type="match status" value="1"/>
</dbReference>
<dbReference type="InterPro" id="IPR004821">
    <property type="entry name" value="Cyt_trans-like"/>
</dbReference>
<dbReference type="InterPro" id="IPR001980">
    <property type="entry name" value="PPAT"/>
</dbReference>
<dbReference type="InterPro" id="IPR014729">
    <property type="entry name" value="Rossmann-like_a/b/a_fold"/>
</dbReference>
<dbReference type="NCBIfam" id="TIGR01510">
    <property type="entry name" value="coaD_prev_kdtB"/>
    <property type="match status" value="1"/>
</dbReference>
<dbReference type="NCBIfam" id="TIGR00125">
    <property type="entry name" value="cyt_tran_rel"/>
    <property type="match status" value="1"/>
</dbReference>
<dbReference type="PANTHER" id="PTHR21342">
    <property type="entry name" value="PHOSPHOPANTETHEINE ADENYLYLTRANSFERASE"/>
    <property type="match status" value="1"/>
</dbReference>
<dbReference type="PANTHER" id="PTHR21342:SF1">
    <property type="entry name" value="PHOSPHOPANTETHEINE ADENYLYLTRANSFERASE"/>
    <property type="match status" value="1"/>
</dbReference>
<dbReference type="Pfam" id="PF01467">
    <property type="entry name" value="CTP_transf_like"/>
    <property type="match status" value="1"/>
</dbReference>
<dbReference type="PRINTS" id="PR01020">
    <property type="entry name" value="LPSBIOSNTHSS"/>
</dbReference>
<dbReference type="SUPFAM" id="SSF52374">
    <property type="entry name" value="Nucleotidylyl transferase"/>
    <property type="match status" value="1"/>
</dbReference>
<proteinExistence type="inferred from homology"/>
<name>COAD_BACC0</name>
<gene>
    <name evidence="1" type="primary">coaD</name>
    <name type="ordered locus">BCAH820_3943</name>
</gene>
<reference key="1">
    <citation type="submission" date="2008-10" db="EMBL/GenBank/DDBJ databases">
        <title>Genome sequence of Bacillus cereus AH820.</title>
        <authorList>
            <person name="Dodson R.J."/>
            <person name="Durkin A.S."/>
            <person name="Rosovitz M.J."/>
            <person name="Rasko D.A."/>
            <person name="Hoffmaster A."/>
            <person name="Ravel J."/>
            <person name="Sutton G."/>
        </authorList>
    </citation>
    <scope>NUCLEOTIDE SEQUENCE [LARGE SCALE GENOMIC DNA]</scope>
    <source>
        <strain>AH820</strain>
    </source>
</reference>